<evidence type="ECO:0000255" key="1">
    <source>
        <dbReference type="HAMAP-Rule" id="MF_00306"/>
    </source>
</evidence>
<gene>
    <name evidence="1" type="primary">srp54</name>
    <name type="ordered locus">MMP1551</name>
</gene>
<keyword id="KW-0963">Cytoplasm</keyword>
<keyword id="KW-0342">GTP-binding</keyword>
<keyword id="KW-0378">Hydrolase</keyword>
<keyword id="KW-0547">Nucleotide-binding</keyword>
<keyword id="KW-1185">Reference proteome</keyword>
<keyword id="KW-0687">Ribonucleoprotein</keyword>
<keyword id="KW-0694">RNA-binding</keyword>
<keyword id="KW-0733">Signal recognition particle</keyword>
<protein>
    <recommendedName>
        <fullName evidence="1">Signal recognition particle 54 kDa protein</fullName>
        <shortName evidence="1">SRP54</shortName>
        <ecNumber evidence="1">3.6.5.4</ecNumber>
    </recommendedName>
</protein>
<sequence>MLDKLGQNLSDALNKLKNATFVDKKLVKEVIKDIQKALIQSDVNVKLVFNMSKEIERKAIDEAPPKGLSKKEHIVKIVYDELVKLLGETTQKLELDPSKKSVILLIGIQGSGKTTSAAKLARYIQKKGLRPGLIAADVYRPAAYQQLKQLSEKINVPLFGDETRTKTPVEITKEGMEKLKKVDVIIIDTAGRHKEEEGLLAEMKEMKDLTNPNEIILVIDGTLGQQAKNQAKAFKESVSEIGSILVTKLDGSAKGGGALSAVAEINAPIKFIGTGEGVDNLEQFDPKKFISRILGLGDLDSLLEKTEDIMDESTEESIDSILKGKFTLIELYAQLETISKMGPMKQILSMIPGMGGNMPKEAAQLTEAKLKRYKIMMDSMTMEEKENPELIKTSRLQRIAKGAGVKQEEIKDLLKYYSTTKNAFGNLKRGKMPKMGGQMGQIMRQLMYKD</sequence>
<proteinExistence type="inferred from homology"/>
<comment type="function">
    <text evidence="1">Involved in targeting and insertion of nascent membrane proteins into the cytoplasmic membrane. Binds to the hydrophobic signal sequence of the ribosome-nascent chain (RNC) as it emerges from the ribosomes. The SRP-RNC complex is then targeted to the cytoplasmic membrane where it interacts with the SRP receptor FtsY.</text>
</comment>
<comment type="catalytic activity">
    <reaction evidence="1">
        <text>GTP + H2O = GDP + phosphate + H(+)</text>
        <dbReference type="Rhea" id="RHEA:19669"/>
        <dbReference type="ChEBI" id="CHEBI:15377"/>
        <dbReference type="ChEBI" id="CHEBI:15378"/>
        <dbReference type="ChEBI" id="CHEBI:37565"/>
        <dbReference type="ChEBI" id="CHEBI:43474"/>
        <dbReference type="ChEBI" id="CHEBI:58189"/>
        <dbReference type="EC" id="3.6.5.4"/>
    </reaction>
</comment>
<comment type="subunit">
    <text evidence="1">Part of the signal recognition particle protein translocation system, which is composed of SRP and FtsY. Archaeal SRP consists of a 7S RNA molecule of 300 nucleotides and two protein subunits: SRP54 and SRP19.</text>
</comment>
<comment type="subcellular location">
    <subcellularLocation>
        <location evidence="1">Cytoplasm</location>
    </subcellularLocation>
    <text evidence="1">The SRP-RNC complex is targeted to the cytoplasmic membrane.</text>
</comment>
<comment type="domain">
    <text evidence="1">Composed of three domains: the N-terminal N domain, which is responsible for interactions with the ribosome, the central G domain, which binds GTP, and the C-terminal M domain, which binds the RNA and the signal sequence of the RNC.</text>
</comment>
<comment type="similarity">
    <text evidence="1">Belongs to the GTP-binding SRP family. SRP54 subfamily.</text>
</comment>
<name>SRP54_METMP</name>
<accession>Q6LX03</accession>
<dbReference type="EC" id="3.6.5.4" evidence="1"/>
<dbReference type="EMBL" id="BX950229">
    <property type="protein sequence ID" value="CAF31107.1"/>
    <property type="molecule type" value="Genomic_DNA"/>
</dbReference>
<dbReference type="RefSeq" id="WP_011171495.1">
    <property type="nucleotide sequence ID" value="NC_005791.1"/>
</dbReference>
<dbReference type="SMR" id="Q6LX03"/>
<dbReference type="STRING" id="267377.MMP1551"/>
<dbReference type="EnsemblBacteria" id="CAF31107">
    <property type="protein sequence ID" value="CAF31107"/>
    <property type="gene ID" value="MMP1551"/>
</dbReference>
<dbReference type="GeneID" id="2761755"/>
<dbReference type="KEGG" id="mmp:MMP1551"/>
<dbReference type="PATRIC" id="fig|267377.15.peg.1589"/>
<dbReference type="eggNOG" id="arCOG01228">
    <property type="taxonomic scope" value="Archaea"/>
</dbReference>
<dbReference type="HOGENOM" id="CLU_009301_6_0_2"/>
<dbReference type="OrthoDB" id="52849at2157"/>
<dbReference type="Proteomes" id="UP000000590">
    <property type="component" value="Chromosome"/>
</dbReference>
<dbReference type="GO" id="GO:0048500">
    <property type="term" value="C:signal recognition particle"/>
    <property type="evidence" value="ECO:0007669"/>
    <property type="project" value="UniProtKB-UniRule"/>
</dbReference>
<dbReference type="GO" id="GO:0008312">
    <property type="term" value="F:7S RNA binding"/>
    <property type="evidence" value="ECO:0007669"/>
    <property type="project" value="UniProtKB-UniRule"/>
</dbReference>
<dbReference type="GO" id="GO:0016887">
    <property type="term" value="F:ATP hydrolysis activity"/>
    <property type="evidence" value="ECO:0007669"/>
    <property type="project" value="InterPro"/>
</dbReference>
<dbReference type="GO" id="GO:0005525">
    <property type="term" value="F:GTP binding"/>
    <property type="evidence" value="ECO:0007669"/>
    <property type="project" value="UniProtKB-UniRule"/>
</dbReference>
<dbReference type="GO" id="GO:0003924">
    <property type="term" value="F:GTPase activity"/>
    <property type="evidence" value="ECO:0007669"/>
    <property type="project" value="UniProtKB-UniRule"/>
</dbReference>
<dbReference type="GO" id="GO:0006614">
    <property type="term" value="P:SRP-dependent cotranslational protein targeting to membrane"/>
    <property type="evidence" value="ECO:0007669"/>
    <property type="project" value="InterPro"/>
</dbReference>
<dbReference type="CDD" id="cd17875">
    <property type="entry name" value="SRP54_G"/>
    <property type="match status" value="1"/>
</dbReference>
<dbReference type="FunFam" id="3.40.50.300:FF:000022">
    <property type="entry name" value="Signal recognition particle 54 kDa subunit"/>
    <property type="match status" value="1"/>
</dbReference>
<dbReference type="Gene3D" id="3.40.50.300">
    <property type="entry name" value="P-loop containing nucleotide triphosphate hydrolases"/>
    <property type="match status" value="1"/>
</dbReference>
<dbReference type="Gene3D" id="1.20.120.140">
    <property type="entry name" value="Signal recognition particle SRP54, nucleotide-binding domain"/>
    <property type="match status" value="1"/>
</dbReference>
<dbReference type="Gene3D" id="1.10.260.30">
    <property type="entry name" value="Signal recognition particle, SRP54 subunit, M-domain"/>
    <property type="match status" value="1"/>
</dbReference>
<dbReference type="HAMAP" id="MF_00306">
    <property type="entry name" value="SRP54"/>
    <property type="match status" value="1"/>
</dbReference>
<dbReference type="InterPro" id="IPR003593">
    <property type="entry name" value="AAA+_ATPase"/>
</dbReference>
<dbReference type="InterPro" id="IPR027417">
    <property type="entry name" value="P-loop_NTPase"/>
</dbReference>
<dbReference type="InterPro" id="IPR036891">
    <property type="entry name" value="Signal_recog_part_SRP54_M_sf"/>
</dbReference>
<dbReference type="InterPro" id="IPR013822">
    <property type="entry name" value="Signal_recog_particl_SRP54_hlx"/>
</dbReference>
<dbReference type="InterPro" id="IPR004125">
    <property type="entry name" value="Signal_recog_particle_SRP54_M"/>
</dbReference>
<dbReference type="InterPro" id="IPR036225">
    <property type="entry name" value="SRP/SRP_N"/>
</dbReference>
<dbReference type="InterPro" id="IPR022941">
    <property type="entry name" value="SRP54"/>
</dbReference>
<dbReference type="InterPro" id="IPR000897">
    <property type="entry name" value="SRP54_GTPase_dom"/>
</dbReference>
<dbReference type="InterPro" id="IPR042101">
    <property type="entry name" value="SRP54_N_sf"/>
</dbReference>
<dbReference type="PANTHER" id="PTHR11564">
    <property type="entry name" value="SIGNAL RECOGNITION PARTICLE 54K PROTEIN SRP54"/>
    <property type="match status" value="1"/>
</dbReference>
<dbReference type="PANTHER" id="PTHR11564:SF5">
    <property type="entry name" value="SIGNAL RECOGNITION PARTICLE SUBUNIT SRP54"/>
    <property type="match status" value="1"/>
</dbReference>
<dbReference type="Pfam" id="PF00448">
    <property type="entry name" value="SRP54"/>
    <property type="match status" value="1"/>
</dbReference>
<dbReference type="Pfam" id="PF02881">
    <property type="entry name" value="SRP54_N"/>
    <property type="match status" value="1"/>
</dbReference>
<dbReference type="Pfam" id="PF02978">
    <property type="entry name" value="SRP_SPB"/>
    <property type="match status" value="1"/>
</dbReference>
<dbReference type="SMART" id="SM00382">
    <property type="entry name" value="AAA"/>
    <property type="match status" value="1"/>
</dbReference>
<dbReference type="SMART" id="SM00962">
    <property type="entry name" value="SRP54"/>
    <property type="match status" value="1"/>
</dbReference>
<dbReference type="SMART" id="SM00963">
    <property type="entry name" value="SRP54_N"/>
    <property type="match status" value="1"/>
</dbReference>
<dbReference type="SUPFAM" id="SSF47364">
    <property type="entry name" value="Domain of the SRP/SRP receptor G-proteins"/>
    <property type="match status" value="1"/>
</dbReference>
<dbReference type="SUPFAM" id="SSF52540">
    <property type="entry name" value="P-loop containing nucleoside triphosphate hydrolases"/>
    <property type="match status" value="1"/>
</dbReference>
<dbReference type="SUPFAM" id="SSF47446">
    <property type="entry name" value="Signal peptide-binding domain"/>
    <property type="match status" value="1"/>
</dbReference>
<dbReference type="PROSITE" id="PS00300">
    <property type="entry name" value="SRP54"/>
    <property type="match status" value="1"/>
</dbReference>
<feature type="chain" id="PRO_1000022789" description="Signal recognition particle 54 kDa protein">
    <location>
        <begin position="1"/>
        <end position="450"/>
    </location>
</feature>
<feature type="binding site" evidence="1">
    <location>
        <begin position="107"/>
        <end position="114"/>
    </location>
    <ligand>
        <name>GTP</name>
        <dbReference type="ChEBI" id="CHEBI:37565"/>
    </ligand>
</feature>
<feature type="binding site" evidence="1">
    <location>
        <begin position="188"/>
        <end position="192"/>
    </location>
    <ligand>
        <name>GTP</name>
        <dbReference type="ChEBI" id="CHEBI:37565"/>
    </ligand>
</feature>
<feature type="binding site" evidence="1">
    <location>
        <begin position="247"/>
        <end position="250"/>
    </location>
    <ligand>
        <name>GTP</name>
        <dbReference type="ChEBI" id="CHEBI:37565"/>
    </ligand>
</feature>
<reference key="1">
    <citation type="journal article" date="2004" name="J. Bacteriol.">
        <title>Complete genome sequence of the genetically tractable hydrogenotrophic methanogen Methanococcus maripaludis.</title>
        <authorList>
            <person name="Hendrickson E.L."/>
            <person name="Kaul R."/>
            <person name="Zhou Y."/>
            <person name="Bovee D."/>
            <person name="Chapman P."/>
            <person name="Chung J."/>
            <person name="Conway de Macario E."/>
            <person name="Dodsworth J.A."/>
            <person name="Gillett W."/>
            <person name="Graham D.E."/>
            <person name="Hackett M."/>
            <person name="Haydock A.K."/>
            <person name="Kang A."/>
            <person name="Land M.L."/>
            <person name="Levy R."/>
            <person name="Lie T.J."/>
            <person name="Major T.A."/>
            <person name="Moore B.C."/>
            <person name="Porat I."/>
            <person name="Palmeiri A."/>
            <person name="Rouse G."/>
            <person name="Saenphimmachak C."/>
            <person name="Soell D."/>
            <person name="Van Dien S."/>
            <person name="Wang T."/>
            <person name="Whitman W.B."/>
            <person name="Xia Q."/>
            <person name="Zhang Y."/>
            <person name="Larimer F.W."/>
            <person name="Olson M.V."/>
            <person name="Leigh J.A."/>
        </authorList>
    </citation>
    <scope>NUCLEOTIDE SEQUENCE [LARGE SCALE GENOMIC DNA]</scope>
    <source>
        <strain>DSM 14266 / JCM 13030 / NBRC 101832 / S2 / LL</strain>
    </source>
</reference>
<organism>
    <name type="scientific">Methanococcus maripaludis (strain DSM 14266 / JCM 13030 / NBRC 101832 / S2 / LL)</name>
    <dbReference type="NCBI Taxonomy" id="267377"/>
    <lineage>
        <taxon>Archaea</taxon>
        <taxon>Methanobacteriati</taxon>
        <taxon>Methanobacteriota</taxon>
        <taxon>Methanomada group</taxon>
        <taxon>Methanococci</taxon>
        <taxon>Methanococcales</taxon>
        <taxon>Methanococcaceae</taxon>
        <taxon>Methanococcus</taxon>
    </lineage>
</organism>